<organism>
    <name type="scientific">Campylobacter curvus (strain 525.92)</name>
    <dbReference type="NCBI Taxonomy" id="360105"/>
    <lineage>
        <taxon>Bacteria</taxon>
        <taxon>Pseudomonadati</taxon>
        <taxon>Campylobacterota</taxon>
        <taxon>Epsilonproteobacteria</taxon>
        <taxon>Campylobacterales</taxon>
        <taxon>Campylobacteraceae</taxon>
        <taxon>Campylobacter</taxon>
    </lineage>
</organism>
<keyword id="KW-0067">ATP-binding</keyword>
<keyword id="KW-0173">Coenzyme A biosynthesis</keyword>
<keyword id="KW-0963">Cytoplasm</keyword>
<keyword id="KW-0460">Magnesium</keyword>
<keyword id="KW-0547">Nucleotide-binding</keyword>
<keyword id="KW-0548">Nucleotidyltransferase</keyword>
<keyword id="KW-1185">Reference proteome</keyword>
<keyword id="KW-0808">Transferase</keyword>
<evidence type="ECO:0000255" key="1">
    <source>
        <dbReference type="HAMAP-Rule" id="MF_00151"/>
    </source>
</evidence>
<sequence length="156" mass="17404">MKRSCIYPGTFDPITNGHLDVIKRAVKIFDRVIVAVAKSDSKNPMFGFDERVTMVERSVEGLKNVSVEGFDNLLVDFAKSHEINTVIRGLRAVSDFEYELQIGYANAALWSEFETVYLMPSLKNAFISSSIVRSVLRHDGDVSALVPSQIFSLLKG</sequence>
<gene>
    <name evidence="1" type="primary">coaD</name>
    <name type="ordered locus">Ccur92_09570</name>
    <name type="ORF">CCV52592_1097</name>
</gene>
<protein>
    <recommendedName>
        <fullName evidence="1">Phosphopantetheine adenylyltransferase</fullName>
        <ecNumber evidence="1">2.7.7.3</ecNumber>
    </recommendedName>
    <alternativeName>
        <fullName evidence="1">Dephospho-CoA pyrophosphorylase</fullName>
    </alternativeName>
    <alternativeName>
        <fullName evidence="1">Pantetheine-phosphate adenylyltransferase</fullName>
        <shortName evidence="1">PPAT</shortName>
    </alternativeName>
</protein>
<comment type="function">
    <text evidence="1">Reversibly transfers an adenylyl group from ATP to 4'-phosphopantetheine, yielding dephospho-CoA (dPCoA) and pyrophosphate.</text>
</comment>
<comment type="catalytic activity">
    <reaction evidence="1">
        <text>(R)-4'-phosphopantetheine + ATP + H(+) = 3'-dephospho-CoA + diphosphate</text>
        <dbReference type="Rhea" id="RHEA:19801"/>
        <dbReference type="ChEBI" id="CHEBI:15378"/>
        <dbReference type="ChEBI" id="CHEBI:30616"/>
        <dbReference type="ChEBI" id="CHEBI:33019"/>
        <dbReference type="ChEBI" id="CHEBI:57328"/>
        <dbReference type="ChEBI" id="CHEBI:61723"/>
        <dbReference type="EC" id="2.7.7.3"/>
    </reaction>
</comment>
<comment type="cofactor">
    <cofactor evidence="1">
        <name>Mg(2+)</name>
        <dbReference type="ChEBI" id="CHEBI:18420"/>
    </cofactor>
</comment>
<comment type="pathway">
    <text evidence="1">Cofactor biosynthesis; coenzyme A biosynthesis; CoA from (R)-pantothenate: step 4/5.</text>
</comment>
<comment type="subunit">
    <text evidence="1">Homohexamer.</text>
</comment>
<comment type="subcellular location">
    <subcellularLocation>
        <location evidence="1">Cytoplasm</location>
    </subcellularLocation>
</comment>
<comment type="similarity">
    <text evidence="1">Belongs to the bacterial CoaD family.</text>
</comment>
<reference key="1">
    <citation type="submission" date="2007-07" db="EMBL/GenBank/DDBJ databases">
        <title>Genome sequence of Campylobacter curvus 525.92 isolated from human feces.</title>
        <authorList>
            <person name="Fouts D.E."/>
            <person name="Mongodin E.F."/>
            <person name="Puiu D."/>
            <person name="Sebastian Y."/>
            <person name="Miller W.G."/>
            <person name="Mandrell R.E."/>
            <person name="Lastovica A.J."/>
            <person name="Nelson K.E."/>
        </authorList>
    </citation>
    <scope>NUCLEOTIDE SEQUENCE [LARGE SCALE GENOMIC DNA]</scope>
    <source>
        <strain>525.92</strain>
    </source>
</reference>
<accession>A7GYG9</accession>
<name>COAD_CAMC5</name>
<proteinExistence type="inferred from homology"/>
<feature type="chain" id="PRO_1000123272" description="Phosphopantetheine adenylyltransferase">
    <location>
        <begin position="1"/>
        <end position="156"/>
    </location>
</feature>
<feature type="binding site" evidence="1">
    <location>
        <begin position="10"/>
        <end position="11"/>
    </location>
    <ligand>
        <name>ATP</name>
        <dbReference type="ChEBI" id="CHEBI:30616"/>
    </ligand>
</feature>
<feature type="binding site" evidence="1">
    <location>
        <position position="10"/>
    </location>
    <ligand>
        <name>substrate</name>
    </ligand>
</feature>
<feature type="binding site" evidence="1">
    <location>
        <position position="18"/>
    </location>
    <ligand>
        <name>ATP</name>
        <dbReference type="ChEBI" id="CHEBI:30616"/>
    </ligand>
</feature>
<feature type="binding site" evidence="1">
    <location>
        <position position="42"/>
    </location>
    <ligand>
        <name>substrate</name>
    </ligand>
</feature>
<feature type="binding site" evidence="1">
    <location>
        <position position="74"/>
    </location>
    <ligand>
        <name>substrate</name>
    </ligand>
</feature>
<feature type="binding site" evidence="1">
    <location>
        <position position="88"/>
    </location>
    <ligand>
        <name>substrate</name>
    </ligand>
</feature>
<feature type="binding site" evidence="1">
    <location>
        <begin position="89"/>
        <end position="91"/>
    </location>
    <ligand>
        <name>ATP</name>
        <dbReference type="ChEBI" id="CHEBI:30616"/>
    </ligand>
</feature>
<feature type="binding site" evidence="1">
    <location>
        <position position="99"/>
    </location>
    <ligand>
        <name>ATP</name>
        <dbReference type="ChEBI" id="CHEBI:30616"/>
    </ligand>
</feature>
<feature type="binding site" evidence="1">
    <location>
        <begin position="124"/>
        <end position="130"/>
    </location>
    <ligand>
        <name>ATP</name>
        <dbReference type="ChEBI" id="CHEBI:30616"/>
    </ligand>
</feature>
<feature type="site" description="Transition state stabilizer" evidence="1">
    <location>
        <position position="18"/>
    </location>
</feature>
<dbReference type="EC" id="2.7.7.3" evidence="1"/>
<dbReference type="EMBL" id="CP000767">
    <property type="protein sequence ID" value="EAU00149.1"/>
    <property type="molecule type" value="Genomic_DNA"/>
</dbReference>
<dbReference type="RefSeq" id="WP_009650449.1">
    <property type="nucleotide sequence ID" value="NC_009715.2"/>
</dbReference>
<dbReference type="SMR" id="A7GYG9"/>
<dbReference type="STRING" id="360105.CCV52592_1097"/>
<dbReference type="KEGG" id="ccv:CCV52592_1097"/>
<dbReference type="HOGENOM" id="CLU_100149_0_1_7"/>
<dbReference type="OrthoDB" id="9806661at2"/>
<dbReference type="UniPathway" id="UPA00241">
    <property type="reaction ID" value="UER00355"/>
</dbReference>
<dbReference type="Proteomes" id="UP000006380">
    <property type="component" value="Chromosome"/>
</dbReference>
<dbReference type="GO" id="GO:0005737">
    <property type="term" value="C:cytoplasm"/>
    <property type="evidence" value="ECO:0007669"/>
    <property type="project" value="UniProtKB-SubCell"/>
</dbReference>
<dbReference type="GO" id="GO:0005524">
    <property type="term" value="F:ATP binding"/>
    <property type="evidence" value="ECO:0007669"/>
    <property type="project" value="UniProtKB-KW"/>
</dbReference>
<dbReference type="GO" id="GO:0004595">
    <property type="term" value="F:pantetheine-phosphate adenylyltransferase activity"/>
    <property type="evidence" value="ECO:0007669"/>
    <property type="project" value="UniProtKB-UniRule"/>
</dbReference>
<dbReference type="GO" id="GO:0015937">
    <property type="term" value="P:coenzyme A biosynthetic process"/>
    <property type="evidence" value="ECO:0007669"/>
    <property type="project" value="UniProtKB-UniRule"/>
</dbReference>
<dbReference type="CDD" id="cd02163">
    <property type="entry name" value="PPAT"/>
    <property type="match status" value="1"/>
</dbReference>
<dbReference type="Gene3D" id="3.40.50.620">
    <property type="entry name" value="HUPs"/>
    <property type="match status" value="1"/>
</dbReference>
<dbReference type="HAMAP" id="MF_00151">
    <property type="entry name" value="PPAT_bact"/>
    <property type="match status" value="1"/>
</dbReference>
<dbReference type="InterPro" id="IPR004821">
    <property type="entry name" value="Cyt_trans-like"/>
</dbReference>
<dbReference type="InterPro" id="IPR001980">
    <property type="entry name" value="PPAT"/>
</dbReference>
<dbReference type="InterPro" id="IPR014729">
    <property type="entry name" value="Rossmann-like_a/b/a_fold"/>
</dbReference>
<dbReference type="NCBIfam" id="TIGR01510">
    <property type="entry name" value="coaD_prev_kdtB"/>
    <property type="match status" value="1"/>
</dbReference>
<dbReference type="NCBIfam" id="TIGR00125">
    <property type="entry name" value="cyt_tran_rel"/>
    <property type="match status" value="1"/>
</dbReference>
<dbReference type="PANTHER" id="PTHR21342">
    <property type="entry name" value="PHOSPHOPANTETHEINE ADENYLYLTRANSFERASE"/>
    <property type="match status" value="1"/>
</dbReference>
<dbReference type="PANTHER" id="PTHR21342:SF1">
    <property type="entry name" value="PHOSPHOPANTETHEINE ADENYLYLTRANSFERASE"/>
    <property type="match status" value="1"/>
</dbReference>
<dbReference type="Pfam" id="PF01467">
    <property type="entry name" value="CTP_transf_like"/>
    <property type="match status" value="1"/>
</dbReference>
<dbReference type="PRINTS" id="PR01020">
    <property type="entry name" value="LPSBIOSNTHSS"/>
</dbReference>
<dbReference type="SUPFAM" id="SSF52374">
    <property type="entry name" value="Nucleotidylyl transferase"/>
    <property type="match status" value="1"/>
</dbReference>